<keyword id="KW-0058">Aromatic hydrocarbons catabolism</keyword>
<keyword id="KW-0520">NAD</keyword>
<keyword id="KW-0560">Oxidoreductase</keyword>
<keyword id="KW-1185">Reference proteome</keyword>
<sequence length="302" mass="31985">MASKASVAIVGSGNISTDLLYKLQRSEWLEPRWMIGIDPESEGLKRARGFGLETSHEGVDWLLGQDEKPDLVFEATSAYVHKAAAPRYEEAGIRAIDLTPAAVGPAVVPPANLRAHLDAPNVNMITCGGQATIPIVYAVSRVVEVPYAEIVASVASVSAGPGTRANIDEFTKTTSKGVEVIGGAKRGKAIIILNPADPPMIMRDTIFCAIPEDADRAAIAASIHDVVSQVQQYVPGYRLLNEPQFDEPSVVNGGNHVVTTFVEVEGAGDFLPPYAGNLDIMTAAATKVGEEIAKELLSAKVS</sequence>
<accession>B1MH39</accession>
<organism>
    <name type="scientific">Mycobacteroides abscessus (strain ATCC 19977 / DSM 44196 / CCUG 20993 / CIP 104536 / JCM 13569 / NCTC 13031 / TMC 1543 / L948)</name>
    <name type="common">Mycobacterium abscessus</name>
    <dbReference type="NCBI Taxonomy" id="561007"/>
    <lineage>
        <taxon>Bacteria</taxon>
        <taxon>Bacillati</taxon>
        <taxon>Actinomycetota</taxon>
        <taxon>Actinomycetes</taxon>
        <taxon>Mycobacteriales</taxon>
        <taxon>Mycobacteriaceae</taxon>
        <taxon>Mycobacteroides</taxon>
        <taxon>Mycobacteroides abscessus</taxon>
    </lineage>
</organism>
<gene>
    <name type="ordered locus">MAB_0625</name>
</gene>
<name>ACDH1_MYCA9</name>
<dbReference type="EC" id="1.2.1.10" evidence="1"/>
<dbReference type="EMBL" id="CU458896">
    <property type="protein sequence ID" value="CAM60723.1"/>
    <property type="molecule type" value="Genomic_DNA"/>
</dbReference>
<dbReference type="RefSeq" id="WP_005064835.1">
    <property type="nucleotide sequence ID" value="NZ_MLCG01000008.1"/>
</dbReference>
<dbReference type="SMR" id="B1MH39"/>
<dbReference type="GeneID" id="93377571"/>
<dbReference type="KEGG" id="mab:MAB_0625"/>
<dbReference type="Proteomes" id="UP000007137">
    <property type="component" value="Chromosome"/>
</dbReference>
<dbReference type="GO" id="GO:0008774">
    <property type="term" value="F:acetaldehyde dehydrogenase (acetylating) activity"/>
    <property type="evidence" value="ECO:0007669"/>
    <property type="project" value="UniProtKB-UniRule"/>
</dbReference>
<dbReference type="GO" id="GO:0051287">
    <property type="term" value="F:NAD binding"/>
    <property type="evidence" value="ECO:0007669"/>
    <property type="project" value="UniProtKB-UniRule"/>
</dbReference>
<dbReference type="GO" id="GO:0009056">
    <property type="term" value="P:catabolic process"/>
    <property type="evidence" value="ECO:0007669"/>
    <property type="project" value="UniProtKB-KW"/>
</dbReference>
<dbReference type="CDD" id="cd23933">
    <property type="entry name" value="ALDH_C"/>
    <property type="match status" value="1"/>
</dbReference>
<dbReference type="Gene3D" id="3.30.360.10">
    <property type="entry name" value="Dihydrodipicolinate Reductase, domain 2"/>
    <property type="match status" value="1"/>
</dbReference>
<dbReference type="Gene3D" id="3.40.50.720">
    <property type="entry name" value="NAD(P)-binding Rossmann-like Domain"/>
    <property type="match status" value="1"/>
</dbReference>
<dbReference type="HAMAP" id="MF_01657">
    <property type="entry name" value="Ac_ald_DH_ac"/>
    <property type="match status" value="1"/>
</dbReference>
<dbReference type="InterPro" id="IPR003361">
    <property type="entry name" value="Acetaldehyde_dehydrogenase"/>
</dbReference>
<dbReference type="InterPro" id="IPR015426">
    <property type="entry name" value="Acetylaldehyde_DH_C"/>
</dbReference>
<dbReference type="InterPro" id="IPR036291">
    <property type="entry name" value="NAD(P)-bd_dom_sf"/>
</dbReference>
<dbReference type="InterPro" id="IPR000534">
    <property type="entry name" value="Semialdehyde_DH_NAD-bd"/>
</dbReference>
<dbReference type="NCBIfam" id="TIGR03215">
    <property type="entry name" value="ac_ald_DH_ac"/>
    <property type="match status" value="1"/>
</dbReference>
<dbReference type="NCBIfam" id="NF006157">
    <property type="entry name" value="PRK08300.1"/>
    <property type="match status" value="1"/>
</dbReference>
<dbReference type="Pfam" id="PF09290">
    <property type="entry name" value="AcetDehyd-dimer"/>
    <property type="match status" value="1"/>
</dbReference>
<dbReference type="PIRSF" id="PIRSF015689">
    <property type="entry name" value="Actaldh_dh_actl"/>
    <property type="match status" value="1"/>
</dbReference>
<dbReference type="SMART" id="SM00859">
    <property type="entry name" value="Semialdhyde_dh"/>
    <property type="match status" value="1"/>
</dbReference>
<dbReference type="SUPFAM" id="SSF55347">
    <property type="entry name" value="Glyceraldehyde-3-phosphate dehydrogenase-like, C-terminal domain"/>
    <property type="match status" value="1"/>
</dbReference>
<dbReference type="SUPFAM" id="SSF51735">
    <property type="entry name" value="NAD(P)-binding Rossmann-fold domains"/>
    <property type="match status" value="1"/>
</dbReference>
<evidence type="ECO:0000255" key="1">
    <source>
        <dbReference type="HAMAP-Rule" id="MF_01657"/>
    </source>
</evidence>
<feature type="chain" id="PRO_0000387670" description="Acetaldehyde dehydrogenase 1">
    <location>
        <begin position="1"/>
        <end position="302"/>
    </location>
</feature>
<feature type="active site" description="Acyl-thioester intermediate" evidence="1">
    <location>
        <position position="127"/>
    </location>
</feature>
<feature type="binding site" evidence="1">
    <location>
        <begin position="12"/>
        <end position="15"/>
    </location>
    <ligand>
        <name>NAD(+)</name>
        <dbReference type="ChEBI" id="CHEBI:57540"/>
    </ligand>
</feature>
<feature type="binding site" evidence="1">
    <location>
        <begin position="158"/>
        <end position="166"/>
    </location>
    <ligand>
        <name>NAD(+)</name>
        <dbReference type="ChEBI" id="CHEBI:57540"/>
    </ligand>
</feature>
<feature type="binding site" evidence="1">
    <location>
        <position position="277"/>
    </location>
    <ligand>
        <name>NAD(+)</name>
        <dbReference type="ChEBI" id="CHEBI:57540"/>
    </ligand>
</feature>
<comment type="catalytic activity">
    <reaction evidence="1">
        <text>acetaldehyde + NAD(+) + CoA = acetyl-CoA + NADH + H(+)</text>
        <dbReference type="Rhea" id="RHEA:23288"/>
        <dbReference type="ChEBI" id="CHEBI:15343"/>
        <dbReference type="ChEBI" id="CHEBI:15378"/>
        <dbReference type="ChEBI" id="CHEBI:57287"/>
        <dbReference type="ChEBI" id="CHEBI:57288"/>
        <dbReference type="ChEBI" id="CHEBI:57540"/>
        <dbReference type="ChEBI" id="CHEBI:57945"/>
        <dbReference type="EC" id="1.2.1.10"/>
    </reaction>
</comment>
<comment type="similarity">
    <text evidence="1">Belongs to the acetaldehyde dehydrogenase family.</text>
</comment>
<proteinExistence type="inferred from homology"/>
<reference key="1">
    <citation type="journal article" date="2009" name="PLoS ONE">
        <title>Non mycobacterial virulence genes in the genome of the emerging pathogen Mycobacterium abscessus.</title>
        <authorList>
            <person name="Ripoll F."/>
            <person name="Pasek S."/>
            <person name="Schenowitz C."/>
            <person name="Dossat C."/>
            <person name="Barbe V."/>
            <person name="Rottman M."/>
            <person name="Macheras E."/>
            <person name="Heym B."/>
            <person name="Herrmann J.L."/>
            <person name="Daffe M."/>
            <person name="Brosch R."/>
            <person name="Risler J.L."/>
            <person name="Gaillard J.L."/>
        </authorList>
    </citation>
    <scope>NUCLEOTIDE SEQUENCE [LARGE SCALE GENOMIC DNA]</scope>
    <source>
        <strain>ATCC 19977 / DSM 44196 / CCUG 20993 / CIP 104536 / JCM 13569 / NCTC 13031 / TMC 1543 / L948</strain>
    </source>
</reference>
<protein>
    <recommendedName>
        <fullName evidence="1">Acetaldehyde dehydrogenase 1</fullName>
        <ecNumber evidence="1">1.2.1.10</ecNumber>
    </recommendedName>
    <alternativeName>
        <fullName evidence="1">Acetaldehyde dehydrogenase [acetylating] 1</fullName>
    </alternativeName>
</protein>